<accession>A7ZKG7</accession>
<organism>
    <name type="scientific">Escherichia coli O139:H28 (strain E24377A / ETEC)</name>
    <dbReference type="NCBI Taxonomy" id="331111"/>
    <lineage>
        <taxon>Bacteria</taxon>
        <taxon>Pseudomonadati</taxon>
        <taxon>Pseudomonadota</taxon>
        <taxon>Gammaproteobacteria</taxon>
        <taxon>Enterobacterales</taxon>
        <taxon>Enterobacteriaceae</taxon>
        <taxon>Escherichia</taxon>
    </lineage>
</organism>
<protein>
    <recommendedName>
        <fullName evidence="1">Dihydroorotase</fullName>
        <shortName evidence="1">DHOase</shortName>
        <ecNumber evidence="1">3.5.2.3</ecNumber>
    </recommendedName>
</protein>
<sequence>MTAPSQVLKIRRPDDWHLHLRDGDMLKTVVPYTSEIYGRAIVMPNLAPPVTTVEAAVAYRQRILDAVPAGHNFTPLMTCYLTDSLDPNELERGFNEGVFTAAKLYPANATTNSSHGVTSIDAIMPVLERMEKIGMPLLVHGEVTHADIDIFDREARFIESVMEPLRQRLTALKVVFEHITTKDAADYVRDGNERLAATITPQHLMFNRNHMLVGGVRPHLYCLPILKRNIHQQALRELVASGFNRVFLGTDSAPHARHRKESSCGCAGCFNAPTALGSYATVFEEMNALQHFEAFCSVNGPQFYGLPVNDTFIELVREEQQVAESIALTDDTLVPFLAGETVRWSVKQ</sequence>
<reference key="1">
    <citation type="journal article" date="2008" name="J. Bacteriol.">
        <title>The pangenome structure of Escherichia coli: comparative genomic analysis of E. coli commensal and pathogenic isolates.</title>
        <authorList>
            <person name="Rasko D.A."/>
            <person name="Rosovitz M.J."/>
            <person name="Myers G.S.A."/>
            <person name="Mongodin E.F."/>
            <person name="Fricke W.F."/>
            <person name="Gajer P."/>
            <person name="Crabtree J."/>
            <person name="Sebaihia M."/>
            <person name="Thomson N.R."/>
            <person name="Chaudhuri R."/>
            <person name="Henderson I.R."/>
            <person name="Sperandio V."/>
            <person name="Ravel J."/>
        </authorList>
    </citation>
    <scope>NUCLEOTIDE SEQUENCE [LARGE SCALE GENOMIC DNA]</scope>
    <source>
        <strain>E24377A / ETEC</strain>
    </source>
</reference>
<proteinExistence type="inferred from homology"/>
<keyword id="KW-0378">Hydrolase</keyword>
<keyword id="KW-0479">Metal-binding</keyword>
<keyword id="KW-0665">Pyrimidine biosynthesis</keyword>
<keyword id="KW-1185">Reference proteome</keyword>
<keyword id="KW-0862">Zinc</keyword>
<name>PYRC_ECO24</name>
<evidence type="ECO:0000255" key="1">
    <source>
        <dbReference type="HAMAP-Rule" id="MF_00219"/>
    </source>
</evidence>
<gene>
    <name evidence="1" type="primary">pyrC</name>
    <name type="ordered locus">EcE24377A_1185</name>
</gene>
<dbReference type="EC" id="3.5.2.3" evidence="1"/>
<dbReference type="EMBL" id="CP000800">
    <property type="protein sequence ID" value="ABV19092.1"/>
    <property type="molecule type" value="Genomic_DNA"/>
</dbReference>
<dbReference type="RefSeq" id="WP_000126556.1">
    <property type="nucleotide sequence ID" value="NC_009801.1"/>
</dbReference>
<dbReference type="SMR" id="A7ZKG7"/>
<dbReference type="MEROPS" id="M38.A02"/>
<dbReference type="KEGG" id="ecw:EcE24377A_1185"/>
<dbReference type="HOGENOM" id="CLU_041558_1_0_6"/>
<dbReference type="UniPathway" id="UPA00070">
    <property type="reaction ID" value="UER00117"/>
</dbReference>
<dbReference type="Proteomes" id="UP000001122">
    <property type="component" value="Chromosome"/>
</dbReference>
<dbReference type="GO" id="GO:0005829">
    <property type="term" value="C:cytosol"/>
    <property type="evidence" value="ECO:0007669"/>
    <property type="project" value="TreeGrafter"/>
</dbReference>
<dbReference type="GO" id="GO:0004151">
    <property type="term" value="F:dihydroorotase activity"/>
    <property type="evidence" value="ECO:0007669"/>
    <property type="project" value="UniProtKB-UniRule"/>
</dbReference>
<dbReference type="GO" id="GO:0008270">
    <property type="term" value="F:zinc ion binding"/>
    <property type="evidence" value="ECO:0007669"/>
    <property type="project" value="UniProtKB-UniRule"/>
</dbReference>
<dbReference type="GO" id="GO:0006207">
    <property type="term" value="P:'de novo' pyrimidine nucleobase biosynthetic process"/>
    <property type="evidence" value="ECO:0007669"/>
    <property type="project" value="TreeGrafter"/>
</dbReference>
<dbReference type="GO" id="GO:0044205">
    <property type="term" value="P:'de novo' UMP biosynthetic process"/>
    <property type="evidence" value="ECO:0007669"/>
    <property type="project" value="UniProtKB-UniRule"/>
</dbReference>
<dbReference type="CDD" id="cd01294">
    <property type="entry name" value="DHOase"/>
    <property type="match status" value="1"/>
</dbReference>
<dbReference type="FunFam" id="3.20.20.140:FF:000006">
    <property type="entry name" value="Dihydroorotase"/>
    <property type="match status" value="1"/>
</dbReference>
<dbReference type="Gene3D" id="3.20.20.140">
    <property type="entry name" value="Metal-dependent hydrolases"/>
    <property type="match status" value="1"/>
</dbReference>
<dbReference type="HAMAP" id="MF_00219">
    <property type="entry name" value="PyrC_classII"/>
    <property type="match status" value="1"/>
</dbReference>
<dbReference type="InterPro" id="IPR006680">
    <property type="entry name" value="Amidohydro-rel"/>
</dbReference>
<dbReference type="InterPro" id="IPR004721">
    <property type="entry name" value="DHOdimr"/>
</dbReference>
<dbReference type="InterPro" id="IPR002195">
    <property type="entry name" value="Dihydroorotase_CS"/>
</dbReference>
<dbReference type="InterPro" id="IPR032466">
    <property type="entry name" value="Metal_Hydrolase"/>
</dbReference>
<dbReference type="NCBIfam" id="TIGR00856">
    <property type="entry name" value="pyrC_dimer"/>
    <property type="match status" value="1"/>
</dbReference>
<dbReference type="PANTHER" id="PTHR43137">
    <property type="entry name" value="DIHYDROOROTASE"/>
    <property type="match status" value="1"/>
</dbReference>
<dbReference type="PANTHER" id="PTHR43137:SF1">
    <property type="entry name" value="DIHYDROOROTASE"/>
    <property type="match status" value="1"/>
</dbReference>
<dbReference type="Pfam" id="PF01979">
    <property type="entry name" value="Amidohydro_1"/>
    <property type="match status" value="1"/>
</dbReference>
<dbReference type="PIRSF" id="PIRSF001237">
    <property type="entry name" value="DHOdimr"/>
    <property type="match status" value="1"/>
</dbReference>
<dbReference type="SUPFAM" id="SSF51556">
    <property type="entry name" value="Metallo-dependent hydrolases"/>
    <property type="match status" value="1"/>
</dbReference>
<dbReference type="PROSITE" id="PS00482">
    <property type="entry name" value="DIHYDROOROTASE_1"/>
    <property type="match status" value="1"/>
</dbReference>
<dbReference type="PROSITE" id="PS00483">
    <property type="entry name" value="DIHYDROOROTASE_2"/>
    <property type="match status" value="1"/>
</dbReference>
<comment type="function">
    <text evidence="1">Catalyzes the reversible cyclization of carbamoyl aspartate to dihydroorotate.</text>
</comment>
<comment type="catalytic activity">
    <reaction evidence="1">
        <text>(S)-dihydroorotate + H2O = N-carbamoyl-L-aspartate + H(+)</text>
        <dbReference type="Rhea" id="RHEA:24296"/>
        <dbReference type="ChEBI" id="CHEBI:15377"/>
        <dbReference type="ChEBI" id="CHEBI:15378"/>
        <dbReference type="ChEBI" id="CHEBI:30864"/>
        <dbReference type="ChEBI" id="CHEBI:32814"/>
        <dbReference type="EC" id="3.5.2.3"/>
    </reaction>
</comment>
<comment type="cofactor">
    <cofactor evidence="1">
        <name>Zn(2+)</name>
        <dbReference type="ChEBI" id="CHEBI:29105"/>
    </cofactor>
    <text evidence="1">Binds 2 Zn(2+) ions per subunit.</text>
</comment>
<comment type="pathway">
    <text evidence="1">Pyrimidine metabolism; UMP biosynthesis via de novo pathway; (S)-dihydroorotate from bicarbonate: step 3/3.</text>
</comment>
<comment type="subunit">
    <text evidence="1">Homodimer.</text>
</comment>
<comment type="similarity">
    <text evidence="1">Belongs to the metallo-dependent hydrolases superfamily. DHOase family. Class II DHOase subfamily.</text>
</comment>
<feature type="chain" id="PRO_1000058648" description="Dihydroorotase">
    <location>
        <begin position="1"/>
        <end position="348"/>
    </location>
</feature>
<feature type="active site" evidence="1">
    <location>
        <position position="251"/>
    </location>
</feature>
<feature type="binding site" evidence="1">
    <location>
        <position position="17"/>
    </location>
    <ligand>
        <name>Zn(2+)</name>
        <dbReference type="ChEBI" id="CHEBI:29105"/>
        <label>1</label>
    </ligand>
</feature>
<feature type="binding site" evidence="1">
    <location>
        <begin position="19"/>
        <end position="21"/>
    </location>
    <ligand>
        <name>substrate</name>
    </ligand>
</feature>
<feature type="binding site" evidence="1">
    <location>
        <position position="19"/>
    </location>
    <ligand>
        <name>Zn(2+)</name>
        <dbReference type="ChEBI" id="CHEBI:29105"/>
        <label>1</label>
    </ligand>
</feature>
<feature type="binding site" evidence="1">
    <location>
        <position position="45"/>
    </location>
    <ligand>
        <name>substrate</name>
    </ligand>
</feature>
<feature type="binding site" description="via carbamate group" evidence="1">
    <location>
        <position position="103"/>
    </location>
    <ligand>
        <name>Zn(2+)</name>
        <dbReference type="ChEBI" id="CHEBI:29105"/>
        <label>1</label>
    </ligand>
</feature>
<feature type="binding site" description="via carbamate group" evidence="1">
    <location>
        <position position="103"/>
    </location>
    <ligand>
        <name>Zn(2+)</name>
        <dbReference type="ChEBI" id="CHEBI:29105"/>
        <label>2</label>
    </ligand>
</feature>
<feature type="binding site" evidence="1">
    <location>
        <position position="140"/>
    </location>
    <ligand>
        <name>substrate</name>
    </ligand>
</feature>
<feature type="binding site" evidence="1">
    <location>
        <position position="140"/>
    </location>
    <ligand>
        <name>Zn(2+)</name>
        <dbReference type="ChEBI" id="CHEBI:29105"/>
        <label>2</label>
    </ligand>
</feature>
<feature type="binding site" evidence="1">
    <location>
        <position position="178"/>
    </location>
    <ligand>
        <name>Zn(2+)</name>
        <dbReference type="ChEBI" id="CHEBI:29105"/>
        <label>2</label>
    </ligand>
</feature>
<feature type="binding site" evidence="1">
    <location>
        <position position="223"/>
    </location>
    <ligand>
        <name>substrate</name>
    </ligand>
</feature>
<feature type="binding site" evidence="1">
    <location>
        <position position="251"/>
    </location>
    <ligand>
        <name>Zn(2+)</name>
        <dbReference type="ChEBI" id="CHEBI:29105"/>
        <label>1</label>
    </ligand>
</feature>
<feature type="binding site" evidence="1">
    <location>
        <position position="255"/>
    </location>
    <ligand>
        <name>substrate</name>
    </ligand>
</feature>
<feature type="binding site" evidence="1">
    <location>
        <position position="267"/>
    </location>
    <ligand>
        <name>substrate</name>
    </ligand>
</feature>
<feature type="modified residue" description="N6-carboxylysine" evidence="1">
    <location>
        <position position="103"/>
    </location>
</feature>